<evidence type="ECO:0000250" key="1">
    <source>
        <dbReference type="UniProtKB" id="P00590"/>
    </source>
</evidence>
<evidence type="ECO:0000255" key="2"/>
<evidence type="ECO:0000255" key="3">
    <source>
        <dbReference type="PROSITE-ProRule" id="PRU10108"/>
    </source>
</evidence>
<evidence type="ECO:0000255" key="4">
    <source>
        <dbReference type="PROSITE-ProRule" id="PRU10109"/>
    </source>
</evidence>
<evidence type="ECO:0000269" key="5">
    <source>
    </source>
</evidence>
<evidence type="ECO:0000269" key="6">
    <source>
    </source>
</evidence>
<evidence type="ECO:0000305" key="7"/>
<evidence type="ECO:0000305" key="8">
    <source>
    </source>
</evidence>
<evidence type="ECO:0000305" key="9">
    <source>
    </source>
</evidence>
<evidence type="ECO:0000305" key="10">
    <source ref="1"/>
</evidence>
<evidence type="ECO:0007744" key="11">
    <source>
        <dbReference type="PDB" id="3DCN"/>
    </source>
</evidence>
<evidence type="ECO:0007744" key="12">
    <source>
        <dbReference type="PDB" id="3DD5"/>
    </source>
</evidence>
<evidence type="ECO:0007744" key="13">
    <source>
        <dbReference type="PDB" id="3DEA"/>
    </source>
</evidence>
<evidence type="ECO:0007829" key="14">
    <source>
        <dbReference type="PDB" id="3DCN"/>
    </source>
</evidence>
<accession>P11373</accession>
<accession>Q8X1A3</accession>
<protein>
    <recommendedName>
        <fullName>Cutinase 1</fullName>
        <ecNumber evidence="8">3.1.1.74</ecNumber>
    </recommendedName>
    <alternativeName>
        <fullName>Cutin hydrolase 1</fullName>
    </alternativeName>
</protein>
<proteinExistence type="evidence at protein level"/>
<reference key="1">
    <citation type="journal article" date="1987" name="Biochemistry">
        <title>Structure of cutinase gene, cDNA, and the derived amino acid sequence from phytopathogenic fungi.</title>
        <authorList>
            <person name="Ettinger W.F."/>
            <person name="Thukral S.K."/>
            <person name="Kolattukudy P.E."/>
        </authorList>
    </citation>
    <scope>NUCLEOTIDE SEQUENCE [GENOMIC DNA]</scope>
</reference>
<reference key="2">
    <citation type="submission" date="2001-11" db="EMBL/GenBank/DDBJ databases">
        <title>Cloning and characterization of the cutinase-encoding gene and cDNA from the fungal phytopathogen, Glomerella cingulata.</title>
        <authorList>
            <person name="Abu Bakar F.D."/>
            <person name="Cooper D.M."/>
            <person name="Zamrod Z."/>
            <person name="Mahadi N.M."/>
            <person name="Sullivan P.A."/>
        </authorList>
    </citation>
    <scope>NUCLEOTIDE SEQUENCE [GENOMIC DNA]</scope>
</reference>
<reference key="3">
    <citation type="journal article" date="2007" name="Appl. Microbiol. Biotechnol.">
        <title>Purification and identification of cutinases from Colletotrichum kahawae and Colletotrichum gloeosporioides.</title>
        <authorList>
            <person name="Chen Z."/>
            <person name="Franco C.F."/>
            <person name="Baptista R.P."/>
            <person name="Cabral J.M.S."/>
            <person name="Coelho A.V."/>
            <person name="Rodrigues C.J. Jr."/>
            <person name="Melo E.P."/>
        </authorList>
    </citation>
    <scope>IDENTIFICATION BY MASS SPECTROMETRY</scope>
    <scope>FUNCTION</scope>
    <scope>CATALYTIC ACTIVITY</scope>
    <scope>ACTIVITY REGULATION</scope>
    <scope>SUBCELLULAR LOCATION</scope>
    <scope>INDUCTION</scope>
    <scope>BLOCKED N-TERMINUS</scope>
    <source>
        <strain>Ch27</strain>
    </source>
</reference>
<reference evidence="11 12 13" key="4">
    <citation type="journal article" date="2009" name="J. Mol. Biol.">
        <title>Catalysis by Glomerella cingulata cutinase requires conformational cycling between the active and inactive states of its catalytic triad.</title>
        <authorList>
            <person name="Nyon M.P."/>
            <person name="Rice D.W."/>
            <person name="Berrisford J.M."/>
            <person name="Hounslow A.M."/>
            <person name="Moir A.J."/>
            <person name="Huang H."/>
            <person name="Nathan S."/>
            <person name="Mahadi N.M."/>
            <person name="Bakar F.D."/>
            <person name="Craven C.J."/>
        </authorList>
    </citation>
    <scope>X-RAY CRYSTALLOGRAPHY (1.90 ANGSTROMS) OF 31-224</scope>
    <scope>ACTIVE SITE</scope>
    <scope>DISULFIDE BONDS</scope>
    <scope>MUTAGENESIS OF HIS-204</scope>
</reference>
<organism>
    <name type="scientific">Colletotrichum gloeosporioides</name>
    <name type="common">Anthracnose fungus</name>
    <name type="synonym">Glomerella cingulata</name>
    <dbReference type="NCBI Taxonomy" id="474922"/>
    <lineage>
        <taxon>Eukaryota</taxon>
        <taxon>Fungi</taxon>
        <taxon>Dikarya</taxon>
        <taxon>Ascomycota</taxon>
        <taxon>Pezizomycotina</taxon>
        <taxon>Sordariomycetes</taxon>
        <taxon>Hypocreomycetidae</taxon>
        <taxon>Glomerellales</taxon>
        <taxon>Glomerellaceae</taxon>
        <taxon>Colletotrichum</taxon>
        <taxon>Colletotrichum gloeosporioides species complex</taxon>
    </lineage>
</organism>
<dbReference type="EC" id="3.1.1.74" evidence="8"/>
<dbReference type="EMBL" id="M21443">
    <property type="protein sequence ID" value="AAA33042.1"/>
    <property type="molecule type" value="Genomic_DNA"/>
</dbReference>
<dbReference type="EMBL" id="AF444194">
    <property type="protein sequence ID" value="AAL38030.1"/>
    <property type="molecule type" value="Genomic_DNA"/>
</dbReference>
<dbReference type="PIR" id="B27451">
    <property type="entry name" value="B27451"/>
</dbReference>
<dbReference type="PDB" id="3DCN">
    <property type="method" value="X-ray"/>
    <property type="resolution" value="1.90 A"/>
    <property type="chains" value="A=31-224"/>
</dbReference>
<dbReference type="PDB" id="3DD5">
    <property type="method" value="X-ray"/>
    <property type="resolution" value="2.60 A"/>
    <property type="chains" value="A/B/C/D/E/F/G/H=31-224"/>
</dbReference>
<dbReference type="PDB" id="3DEA">
    <property type="method" value="X-ray"/>
    <property type="resolution" value="2.30 A"/>
    <property type="chains" value="A/B=31-224"/>
</dbReference>
<dbReference type="PDBsum" id="3DCN"/>
<dbReference type="PDBsum" id="3DD5"/>
<dbReference type="PDBsum" id="3DEA"/>
<dbReference type="SMR" id="P11373"/>
<dbReference type="ESTHER" id="colgl-cutas">
    <property type="family name" value="Cutinase"/>
</dbReference>
<dbReference type="OMA" id="KIFCLPT"/>
<dbReference type="BRENDA" id="3.1.1.74">
    <property type="organism ID" value="1569"/>
</dbReference>
<dbReference type="EvolutionaryTrace" id="P11373"/>
<dbReference type="GO" id="GO:0005576">
    <property type="term" value="C:extracellular region"/>
    <property type="evidence" value="ECO:0000314"/>
    <property type="project" value="UniProtKB"/>
</dbReference>
<dbReference type="GO" id="GO:0050525">
    <property type="term" value="F:cutinase activity"/>
    <property type="evidence" value="ECO:0000314"/>
    <property type="project" value="UniProtKB"/>
</dbReference>
<dbReference type="GO" id="GO:0016052">
    <property type="term" value="P:carbohydrate catabolic process"/>
    <property type="evidence" value="ECO:0007669"/>
    <property type="project" value="TreeGrafter"/>
</dbReference>
<dbReference type="FunFam" id="3.40.50.1820:FF:000235">
    <property type="entry name" value="Cutinase 1"/>
    <property type="match status" value="1"/>
</dbReference>
<dbReference type="Gene3D" id="3.40.50.1820">
    <property type="entry name" value="alpha/beta hydrolase"/>
    <property type="match status" value="1"/>
</dbReference>
<dbReference type="InterPro" id="IPR029058">
    <property type="entry name" value="AB_hydrolase_fold"/>
</dbReference>
<dbReference type="InterPro" id="IPR000675">
    <property type="entry name" value="Cutinase/axe"/>
</dbReference>
<dbReference type="InterPro" id="IPR043580">
    <property type="entry name" value="CUTINASE_1"/>
</dbReference>
<dbReference type="InterPro" id="IPR043579">
    <property type="entry name" value="CUTINASE_2"/>
</dbReference>
<dbReference type="InterPro" id="IPR011150">
    <property type="entry name" value="Cutinase_monf"/>
</dbReference>
<dbReference type="PANTHER" id="PTHR48250:SF3">
    <property type="entry name" value="CUTINASE 1-RELATED"/>
    <property type="match status" value="1"/>
</dbReference>
<dbReference type="PANTHER" id="PTHR48250">
    <property type="entry name" value="CUTINASE 2-RELATED"/>
    <property type="match status" value="1"/>
</dbReference>
<dbReference type="Pfam" id="PF01083">
    <property type="entry name" value="Cutinase"/>
    <property type="match status" value="1"/>
</dbReference>
<dbReference type="PRINTS" id="PR00129">
    <property type="entry name" value="CUTINASE"/>
</dbReference>
<dbReference type="SMART" id="SM01110">
    <property type="entry name" value="Cutinase"/>
    <property type="match status" value="1"/>
</dbReference>
<dbReference type="SUPFAM" id="SSF53474">
    <property type="entry name" value="alpha/beta-Hydrolases"/>
    <property type="match status" value="1"/>
</dbReference>
<dbReference type="PROSITE" id="PS00155">
    <property type="entry name" value="CUTINASE_1"/>
    <property type="match status" value="1"/>
</dbReference>
<dbReference type="PROSITE" id="PS00931">
    <property type="entry name" value="CUTINASE_2"/>
    <property type="match status" value="1"/>
</dbReference>
<sequence>MKFLSVLSLAITLAAAAPVEVETGVALETRQSSTRNELETGSSSACPKVIYIFARASTEPGNMGISAGPIVADALERIYGANNVWVQGVGGPYLADLASNFLPDGTSSAAINEARRLFTLANTKCPNAAIVSGGYSQGTAVMAGSISGLSTTIKNQIKGVVLFGYTKNLQNLGRIPNFETSKTEVYCDIADAVCYGTLFILPAHFLYQTDAAVAAPRFLQARIG</sequence>
<feature type="signal peptide" evidence="2">
    <location>
        <begin position="1"/>
        <end position="16"/>
    </location>
</feature>
<feature type="chain" id="PRO_0000006437" description="Cutinase 1">
    <location>
        <begin position="17"/>
        <end position="224"/>
    </location>
</feature>
<feature type="active site" description="Nucleophile" evidence="9">
    <location>
        <position position="136"/>
    </location>
</feature>
<feature type="active site" evidence="9">
    <location>
        <position position="191"/>
    </location>
</feature>
<feature type="active site" description="Proton donor/acceptor" evidence="9">
    <location>
        <position position="204"/>
    </location>
</feature>
<feature type="site" description="Transition state stabilizer" evidence="1">
    <location>
        <position position="57"/>
    </location>
</feature>
<feature type="site" description="Transition state stabilizer" evidence="1">
    <location>
        <position position="137"/>
    </location>
</feature>
<feature type="disulfide bond" evidence="6 11 12 13">
    <location>
        <begin position="46"/>
        <end position="125"/>
    </location>
</feature>
<feature type="disulfide bond" evidence="6 11 12 13">
    <location>
        <begin position="187"/>
        <end position="194"/>
    </location>
</feature>
<feature type="mutagenesis site" description="Abolishes substrate binding." evidence="6">
    <original>H</original>
    <variation>N</variation>
    <location>
        <position position="204"/>
    </location>
</feature>
<feature type="sequence conflict" description="In Ref. 2; AAL38030." evidence="7" ref="2">
    <original>VL</original>
    <variation>IV</variation>
    <location>
        <begin position="6"/>
        <end position="7"/>
    </location>
</feature>
<feature type="sequence conflict" description="In Ref. 2; AAL38030." evidence="7" ref="2">
    <original>N</original>
    <variation>D</variation>
    <location>
        <position position="83"/>
    </location>
</feature>
<feature type="turn" evidence="14">
    <location>
        <begin position="37"/>
        <end position="39"/>
    </location>
</feature>
<feature type="strand" evidence="14">
    <location>
        <begin position="48"/>
        <end position="54"/>
    </location>
</feature>
<feature type="turn" evidence="14">
    <location>
        <begin position="61"/>
        <end position="63"/>
    </location>
</feature>
<feature type="helix" evidence="14">
    <location>
        <begin position="67"/>
        <end position="79"/>
    </location>
</feature>
<feature type="helix" evidence="14">
    <location>
        <begin position="81"/>
        <end position="83"/>
    </location>
</feature>
<feature type="strand" evidence="14">
    <location>
        <begin position="84"/>
        <end position="88"/>
    </location>
</feature>
<feature type="helix" evidence="14">
    <location>
        <begin position="98"/>
        <end position="101"/>
    </location>
</feature>
<feature type="helix" evidence="14">
    <location>
        <begin position="108"/>
        <end position="124"/>
    </location>
</feature>
<feature type="strand" evidence="14">
    <location>
        <begin position="128"/>
        <end position="135"/>
    </location>
</feature>
<feature type="helix" evidence="14">
    <location>
        <begin position="137"/>
        <end position="146"/>
    </location>
</feature>
<feature type="helix" evidence="14">
    <location>
        <begin position="151"/>
        <end position="156"/>
    </location>
</feature>
<feature type="strand" evidence="14">
    <location>
        <begin position="157"/>
        <end position="163"/>
    </location>
</feature>
<feature type="turn" evidence="14">
    <location>
        <begin position="166"/>
        <end position="173"/>
    </location>
</feature>
<feature type="helix" evidence="14">
    <location>
        <begin position="180"/>
        <end position="182"/>
    </location>
</feature>
<feature type="strand" evidence="14">
    <location>
        <begin position="183"/>
        <end position="186"/>
    </location>
</feature>
<feature type="helix" evidence="14">
    <location>
        <begin position="192"/>
        <end position="195"/>
    </location>
</feature>
<feature type="helix" evidence="14">
    <location>
        <begin position="208"/>
        <end position="212"/>
    </location>
</feature>
<feature type="helix" evidence="14">
    <location>
        <begin position="214"/>
        <end position="220"/>
    </location>
</feature>
<comment type="function">
    <text evidence="1 5">Catalyzes the hydrolysis of complex carboxylic polyesters found in the cell wall of plants (PubMed:17043825). Degrades cutin, a macromolecule that forms the structure of the plant cuticle (PubMed:17043825). Allows pathogenic fungi to penetrate through the cuticular barrier into the host plant during the initial stage of fungal infection (By similarity).</text>
</comment>
<comment type="catalytic activity">
    <reaction evidence="3 4 8">
        <text>cutin + H2O = cutin monomers.</text>
        <dbReference type="EC" id="3.1.1.74"/>
    </reaction>
</comment>
<comment type="activity regulation">
    <text evidence="5">Inhibited by diisopropyl fluorophosphate (DFP).</text>
</comment>
<comment type="subcellular location">
    <subcellularLocation>
        <location evidence="5">Secreted</location>
    </subcellularLocation>
</comment>
<comment type="induction">
    <text evidence="5">By contact with cutin.</text>
</comment>
<comment type="PTM">
    <text evidence="10">The 2 disulfide bonds play a critical role in holding the catalytic residues in juxta-position; reduction of the disulfide bridges results in the complete inactivation of the enzyme.</text>
</comment>
<comment type="PTM">
    <text evidence="5">The N-terminus is blocked.</text>
</comment>
<comment type="miscellaneous">
    <text>On the 2D-gel the determined MW is: 20.8 kDa.</text>
</comment>
<comment type="similarity">
    <text evidence="7">Belongs to the cutinase family.</text>
</comment>
<gene>
    <name type="primary">CUTA</name>
</gene>
<keyword id="KW-0002">3D-structure</keyword>
<keyword id="KW-1015">Disulfide bond</keyword>
<keyword id="KW-0378">Hydrolase</keyword>
<keyword id="KW-0964">Secreted</keyword>
<keyword id="KW-0719">Serine esterase</keyword>
<keyword id="KW-0732">Signal</keyword>
<keyword id="KW-0843">Virulence</keyword>
<name>CUTI1_COLGL</name>